<feature type="chain" id="PRO_0000436129" description="Indole diterpene prenyltransferase paxD">
    <location>
        <begin position="1"/>
        <end position="438"/>
    </location>
</feature>
<feature type="binding site" evidence="1">
    <location>
        <begin position="80"/>
        <end position="81"/>
    </location>
    <ligand>
        <name>L-tryptophan</name>
        <dbReference type="ChEBI" id="CHEBI:57912"/>
    </ligand>
</feature>
<feature type="binding site" evidence="1">
    <location>
        <position position="102"/>
    </location>
    <ligand>
        <name>substrate</name>
    </ligand>
</feature>
<feature type="binding site" evidence="1">
    <location>
        <position position="190"/>
    </location>
    <ligand>
        <name>substrate</name>
    </ligand>
</feature>
<feature type="binding site" evidence="1">
    <location>
        <position position="264"/>
    </location>
    <ligand>
        <name>substrate</name>
    </ligand>
</feature>
<feature type="binding site" evidence="1">
    <location>
        <position position="266"/>
    </location>
    <ligand>
        <name>substrate</name>
    </ligand>
</feature>
<feature type="binding site" evidence="1">
    <location>
        <position position="268"/>
    </location>
    <ligand>
        <name>substrate</name>
    </ligand>
</feature>
<feature type="binding site" evidence="1">
    <location>
        <position position="349"/>
    </location>
    <ligand>
        <name>substrate</name>
    </ligand>
</feature>
<feature type="binding site" evidence="1">
    <location>
        <position position="418"/>
    </location>
    <ligand>
        <name>substrate</name>
    </ligand>
</feature>
<organism evidence="12">
    <name type="scientific">Penicillium paxilli</name>
    <dbReference type="NCBI Taxonomy" id="70109"/>
    <lineage>
        <taxon>Eukaryota</taxon>
        <taxon>Fungi</taxon>
        <taxon>Dikarya</taxon>
        <taxon>Ascomycota</taxon>
        <taxon>Pezizomycotina</taxon>
        <taxon>Eurotiomycetes</taxon>
        <taxon>Eurotiomycetidae</taxon>
        <taxon>Eurotiales</taxon>
        <taxon>Aspergillaceae</taxon>
        <taxon>Penicillium</taxon>
    </lineage>
</organism>
<protein>
    <recommendedName>
        <fullName evidence="7">Indole diterpene prenyltransferase paxD</fullName>
        <ecNumber evidence="5 10">2.5.1.-</ecNumber>
    </recommendedName>
    <alternativeName>
        <fullName evidence="6">Paxilline synthesis protein D</fullName>
    </alternativeName>
</protein>
<name>PAXD_PENPX</name>
<evidence type="ECO:0000250" key="1">
    <source>
        <dbReference type="UniProtKB" id="Q50EL0"/>
    </source>
</evidence>
<evidence type="ECO:0000269" key="2">
    <source>
    </source>
</evidence>
<evidence type="ECO:0000269" key="3">
    <source>
    </source>
</evidence>
<evidence type="ECO:0000269" key="4">
    <source>
    </source>
</evidence>
<evidence type="ECO:0000269" key="5">
    <source>
    </source>
</evidence>
<evidence type="ECO:0000303" key="6">
    <source>
    </source>
</evidence>
<evidence type="ECO:0000303" key="7">
    <source>
    </source>
</evidence>
<evidence type="ECO:0000305" key="8"/>
<evidence type="ECO:0000305" key="9">
    <source>
    </source>
</evidence>
<evidence type="ECO:0000305" key="10">
    <source>
    </source>
</evidence>
<evidence type="ECO:0000305" key="11">
    <source>
    </source>
</evidence>
<evidence type="ECO:0000312" key="12">
    <source>
        <dbReference type="EMBL" id="AAK11526.2"/>
    </source>
</evidence>
<keyword id="KW-0808">Transferase</keyword>
<dbReference type="EC" id="2.5.1.-" evidence="5 10"/>
<dbReference type="EMBL" id="HM171111">
    <property type="protein sequence ID" value="AAK11526.2"/>
    <property type="molecule type" value="Genomic_DNA"/>
</dbReference>
<dbReference type="SMR" id="Q9C451"/>
<dbReference type="KEGG" id="ag:AAK11526"/>
<dbReference type="BioCyc" id="MetaCyc:MONOMER-18640"/>
<dbReference type="GO" id="GO:0004659">
    <property type="term" value="F:prenyltransferase activity"/>
    <property type="evidence" value="ECO:0000314"/>
    <property type="project" value="GO_Central"/>
</dbReference>
<dbReference type="GO" id="GO:0140873">
    <property type="term" value="P:paxilline biosynthetic process"/>
    <property type="evidence" value="ECO:0000314"/>
    <property type="project" value="GO_Central"/>
</dbReference>
<dbReference type="CDD" id="cd13929">
    <property type="entry name" value="PT-DMATS_CymD"/>
    <property type="match status" value="1"/>
</dbReference>
<dbReference type="InterPro" id="IPR017795">
    <property type="entry name" value="Aro_prenylTrfase_DMATS"/>
</dbReference>
<dbReference type="InterPro" id="IPR012148">
    <property type="entry name" value="DMATS-type_fun"/>
</dbReference>
<dbReference type="NCBIfam" id="TIGR03429">
    <property type="entry name" value="arom_pren_DMATS"/>
    <property type="match status" value="1"/>
</dbReference>
<dbReference type="PANTHER" id="PTHR40627">
    <property type="entry name" value="INDOLE PRENYLTRANSFERASE TDIB-RELATED"/>
    <property type="match status" value="1"/>
</dbReference>
<dbReference type="PANTHER" id="PTHR40627:SF4">
    <property type="entry name" value="PRENYLTRANSFERASE ASQH1-RELATED"/>
    <property type="match status" value="1"/>
</dbReference>
<dbReference type="Pfam" id="PF11991">
    <property type="entry name" value="Trp_DMAT"/>
    <property type="match status" value="1"/>
</dbReference>
<dbReference type="PIRSF" id="PIRSF000509">
    <property type="entry name" value="Trp_DMAT"/>
    <property type="match status" value="1"/>
</dbReference>
<accession>Q9C451</accession>
<reference key="1">
    <citation type="journal article" date="2001" name="Mol. Microbiol.">
        <title>Molecular cloning and genetic analysis of an indole-diterpene gene cluster from Penicillium paxilli.</title>
        <authorList>
            <person name="Young C."/>
            <person name="McMillan L."/>
            <person name="Telfer E."/>
            <person name="Scott B."/>
        </authorList>
    </citation>
    <scope>NUCLEOTIDE SEQUENCE [GENOMIC DNA]</scope>
    <scope>FUNCTION</scope>
    <source>
        <strain>PN2013</strain>
    </source>
</reference>
<reference key="2">
    <citation type="journal article" date="2013" name="Toxins">
        <title>Deletion and gene expression analyses define the paxilline biosynthetic gene cluster in Penicillium paxilli.</title>
        <authorList>
            <person name="Scott B."/>
            <person name="Young C.A."/>
            <person name="Saikia S."/>
            <person name="McMillan L.K."/>
            <person name="Monahan B.J."/>
            <person name="Koulman A."/>
            <person name="Astin J."/>
            <person name="Eaton C.J."/>
            <person name="Bryant A."/>
            <person name="Wrenn R.E."/>
            <person name="Finch S.C."/>
            <person name="Tapper B.A."/>
            <person name="Parker E.J."/>
            <person name="Jameson G.B."/>
        </authorList>
    </citation>
    <scope>NUCLEOTIDE SEQUENCE [GENOMIC DNA]</scope>
    <scope>FUNCTION</scope>
    <source>
        <strain>PN2013</strain>
    </source>
</reference>
<reference key="3">
    <citation type="journal article" date="2014" name="Appl. Microbiol. Biotechnol.">
        <title>Functional analysis of a prenyltransferase gene (paxD) in the paxilline biosynthetic gene cluster.</title>
        <authorList>
            <person name="Liu C."/>
            <person name="Noike M."/>
            <person name="Minami A."/>
            <person name="Oikawa H."/>
            <person name="Dairi T."/>
        </authorList>
    </citation>
    <scope>FUNCTION</scope>
    <scope>CATALYTIC ACTIVITY</scope>
    <scope>BIOPHYSICOCHEMICAL PROPERTIES</scope>
</reference>
<reference key="4">
    <citation type="journal article" date="2013" name="Appl. Environ. Microbiol.">
        <title>Regiospecificities and prenylation mode specificities of the fungal indole diterpene prenyltransferases AtmD and PaxD.</title>
        <authorList>
            <person name="Liu C."/>
            <person name="Minami A."/>
            <person name="Noike M."/>
            <person name="Toshima H."/>
            <person name="Oikawa H."/>
            <person name="Dairi T."/>
        </authorList>
    </citation>
    <scope>FUNCTION</scope>
    <scope>CATALYTIC ACTIVITY</scope>
    <scope>BIOPHYSICOCHEMICAL PROPERTIES</scope>
</reference>
<proteinExistence type="evidence at protein level"/>
<comment type="function">
    <text evidence="2 3 4">Indole diterpene prenyltransferase; part of the gene cluster that mediates the biosynthesis of paxilline, a mycotoxin that acts as an inhibitor of mammalian maxi-K channels (PubMed:11169115, PubMed:23949005). PaxG, the geranylgeranyl diphosphate (GGPP) synthase is proposed to catalyze the first step in paxilline biosynthesis (PubMed:23949005). Condensation of indole-3-glycerol phosphate with GGPP by paxC then forms 3-geranylgeranylindole (3-GGI), followed by epoxidation and cyclization of this intermediate (by paxM and paxB) to form paspaline (PubMed:23949005). Paspaline is subsequently converted to 13-desoxypaxilline by paxP, the latter being then converted to paxilline by paxQ (PubMed:23949005). Finally paxilline can be mono- and di-prenylated by paxD (PubMed:23949005).</text>
</comment>
<comment type="biophysicochemical properties">
    <kinetics>
        <KM evidence="3 5">106.4 uM for paxilline</KM>
        <KM evidence="3 5">0.57 uM for dimethylallyl diphosphate (DMAPP)</KM>
    </kinetics>
    <phDependence>
        <text evidence="3">Optimum pH is 8.0.</text>
    </phDependence>
    <temperatureDependence>
        <text evidence="3">Optimum temperature is 37 degrees Celsius.</text>
    </temperatureDependence>
</comment>
<comment type="pathway">
    <text evidence="3 9 11">Secondary metabolite biosynthesis.</text>
</comment>
<comment type="similarity">
    <text evidence="8">Belongs to the tryptophan dimethylallyltransferase family.</text>
</comment>
<sequence>MQSDELQIPPWESLAEGLGFSNADEEYWWTVFGQPLNKLMDWADYSTSEKYRVLAFIHRYVIPTCGPRPKPNGDQYWDTFMGFDHTPIQVSINFYNSKATVRTGNIPISEASGTTEDPINQKASLDTIASQRHLVPGHNLRLFKHFTDAFFIPNEEANILNAELENRTIAMQAVQCMLSYDFPYRQIQTKVAICPMWKSMQVKRPMGDLMISSIKDLGIDAADYMKSLKVIEDFINSEKAVQSGAYAIFFAFDTMLTDDYQRTRVKIYFATQSTAFNNMVDIFTLGGRLDGPEMQRATKELRKLWMSTMAIPDGLRDDETLPKSPLPCAGVIFNFEIWPGADKPNPKIYLPCAYYGKDDLDIADGMDSFFKDQGWSKSFHSYKDNYIKAFVKDGKVMCRHHDISFSYKGQGAYITAYYKPELSEYADPSVWAPKLFKA</sequence>
<gene>
    <name evidence="6" type="primary">paxD</name>
</gene>